<name>RNZ_STRP8</name>
<keyword id="KW-0255">Endonuclease</keyword>
<keyword id="KW-0378">Hydrolase</keyword>
<keyword id="KW-0479">Metal-binding</keyword>
<keyword id="KW-0540">Nuclease</keyword>
<keyword id="KW-0819">tRNA processing</keyword>
<keyword id="KW-0862">Zinc</keyword>
<comment type="function">
    <text evidence="1">Zinc phosphodiesterase, which displays some tRNA 3'-processing endonuclease activity. Probably involved in tRNA maturation, by removing a 3'-trailer from precursor tRNA.</text>
</comment>
<comment type="catalytic activity">
    <reaction evidence="1">
        <text>Endonucleolytic cleavage of RNA, removing extra 3' nucleotides from tRNA precursor, generating 3' termini of tRNAs. A 3'-hydroxy group is left at the tRNA terminus and a 5'-phosphoryl group is left at the trailer molecule.</text>
        <dbReference type="EC" id="3.1.26.11"/>
    </reaction>
</comment>
<comment type="cofactor">
    <cofactor evidence="1">
        <name>Zn(2+)</name>
        <dbReference type="ChEBI" id="CHEBI:29105"/>
    </cofactor>
    <text evidence="1">Binds 2 Zn(2+) ions.</text>
</comment>
<comment type="subunit">
    <text evidence="1">Homodimer.</text>
</comment>
<comment type="similarity">
    <text evidence="1">Belongs to the RNase Z family.</text>
</comment>
<gene>
    <name evidence="1" type="primary">rnz</name>
    <name type="ordered locus">spyM18_0981</name>
</gene>
<organism>
    <name type="scientific">Streptococcus pyogenes serotype M18 (strain MGAS8232)</name>
    <dbReference type="NCBI Taxonomy" id="186103"/>
    <lineage>
        <taxon>Bacteria</taxon>
        <taxon>Bacillati</taxon>
        <taxon>Bacillota</taxon>
        <taxon>Bacilli</taxon>
        <taxon>Lactobacillales</taxon>
        <taxon>Streptococcaceae</taxon>
        <taxon>Streptococcus</taxon>
    </lineage>
</organism>
<dbReference type="EC" id="3.1.26.11" evidence="1"/>
<dbReference type="EMBL" id="AE009949">
    <property type="protein sequence ID" value="AAL97621.1"/>
    <property type="molecule type" value="Genomic_DNA"/>
</dbReference>
<dbReference type="RefSeq" id="WP_009881223.1">
    <property type="nucleotide sequence ID" value="NC_003485.1"/>
</dbReference>
<dbReference type="SMR" id="Q8P1A6"/>
<dbReference type="GeneID" id="69900974"/>
<dbReference type="KEGG" id="spm:spyM18_0981"/>
<dbReference type="HOGENOM" id="CLU_031317_2_0_9"/>
<dbReference type="GO" id="GO:0042781">
    <property type="term" value="F:3'-tRNA processing endoribonuclease activity"/>
    <property type="evidence" value="ECO:0007669"/>
    <property type="project" value="UniProtKB-UniRule"/>
</dbReference>
<dbReference type="GO" id="GO:0008270">
    <property type="term" value="F:zinc ion binding"/>
    <property type="evidence" value="ECO:0007669"/>
    <property type="project" value="UniProtKB-UniRule"/>
</dbReference>
<dbReference type="CDD" id="cd07717">
    <property type="entry name" value="RNaseZ_ZiPD-like_MBL-fold"/>
    <property type="match status" value="1"/>
</dbReference>
<dbReference type="FunFam" id="3.60.15.10:FF:000002">
    <property type="entry name" value="Ribonuclease Z"/>
    <property type="match status" value="1"/>
</dbReference>
<dbReference type="Gene3D" id="3.60.15.10">
    <property type="entry name" value="Ribonuclease Z/Hydroxyacylglutathione hydrolase-like"/>
    <property type="match status" value="1"/>
</dbReference>
<dbReference type="HAMAP" id="MF_01818">
    <property type="entry name" value="RNase_Z_BN"/>
    <property type="match status" value="1"/>
</dbReference>
<dbReference type="InterPro" id="IPR001279">
    <property type="entry name" value="Metallo-B-lactamas"/>
</dbReference>
<dbReference type="InterPro" id="IPR036866">
    <property type="entry name" value="RibonucZ/Hydroxyglut_hydro"/>
</dbReference>
<dbReference type="InterPro" id="IPR013471">
    <property type="entry name" value="RNase_Z/BN"/>
</dbReference>
<dbReference type="NCBIfam" id="NF000801">
    <property type="entry name" value="PRK00055.1-3"/>
    <property type="match status" value="1"/>
</dbReference>
<dbReference type="NCBIfam" id="TIGR02651">
    <property type="entry name" value="RNase_Z"/>
    <property type="match status" value="1"/>
</dbReference>
<dbReference type="PANTHER" id="PTHR46018">
    <property type="entry name" value="ZINC PHOSPHODIESTERASE ELAC PROTEIN 1"/>
    <property type="match status" value="1"/>
</dbReference>
<dbReference type="PANTHER" id="PTHR46018:SF2">
    <property type="entry name" value="ZINC PHOSPHODIESTERASE ELAC PROTEIN 1"/>
    <property type="match status" value="1"/>
</dbReference>
<dbReference type="Pfam" id="PF00753">
    <property type="entry name" value="Lactamase_B"/>
    <property type="match status" value="1"/>
</dbReference>
<dbReference type="SUPFAM" id="SSF56281">
    <property type="entry name" value="Metallo-hydrolase/oxidoreductase"/>
    <property type="match status" value="1"/>
</dbReference>
<proteinExistence type="inferred from homology"/>
<evidence type="ECO:0000255" key="1">
    <source>
        <dbReference type="HAMAP-Rule" id="MF_01818"/>
    </source>
</evidence>
<reference key="1">
    <citation type="journal article" date="2002" name="Proc. Natl. Acad. Sci. U.S.A.">
        <title>Genome sequence and comparative microarray analysis of serotype M18 group A Streptococcus strains associated with acute rheumatic fever outbreaks.</title>
        <authorList>
            <person name="Smoot J.C."/>
            <person name="Barbian K.D."/>
            <person name="Van Gompel J.J."/>
            <person name="Smoot L.M."/>
            <person name="Chaussee M.S."/>
            <person name="Sylva G.L."/>
            <person name="Sturdevant D.E."/>
            <person name="Ricklefs S.M."/>
            <person name="Porcella S.F."/>
            <person name="Parkins L.D."/>
            <person name="Beres S.B."/>
            <person name="Campbell D.S."/>
            <person name="Smith T.M."/>
            <person name="Zhang Q."/>
            <person name="Kapur V."/>
            <person name="Daly J.A."/>
            <person name="Veasy L.G."/>
            <person name="Musser J.M."/>
        </authorList>
    </citation>
    <scope>NUCLEOTIDE SEQUENCE [LARGE SCALE GENOMIC DNA]</scope>
    <source>
        <strain>MGAS8232</strain>
    </source>
</reference>
<protein>
    <recommendedName>
        <fullName evidence="1">Ribonuclease Z</fullName>
        <shortName evidence="1">RNase Z</shortName>
        <ecNumber evidence="1">3.1.26.11</ecNumber>
    </recommendedName>
    <alternativeName>
        <fullName evidence="1">tRNA 3 endonuclease</fullName>
    </alternativeName>
    <alternativeName>
        <fullName evidence="1">tRNase Z</fullName>
    </alternativeName>
</protein>
<sequence>MELQFLGTGAGQPAKQRNVSSLALKLLDEINEVWMFDCGEGTQRQILETTIKPRKIRKIFITHLHGDHIFGLPGFLSSRSFQASEEQTDLDIYGPIGIKTYVLTSLKVSGARVPYQIHFHEFDDKSLGKIMETDKFVVYAERLAHTIFCMGYRVVQKDLEGTLDAEALKAAGVPFGPLFGKIKNGQDVELEDGRLICAKDYISAPKKGKIITIIGDTRKTSASVKLAKDADVLVHESTYGKGDERIARNHGHSTNMQAAQIAHEAGAKRLLLNHVSARFLGRDCRQMEKDAATIFENVKMVQDLEEVII</sequence>
<feature type="chain" id="PRO_0000155911" description="Ribonuclease Z">
    <location>
        <begin position="1"/>
        <end position="309"/>
    </location>
</feature>
<feature type="active site" description="Proton acceptor" evidence="1">
    <location>
        <position position="67"/>
    </location>
</feature>
<feature type="binding site" evidence="1">
    <location>
        <position position="63"/>
    </location>
    <ligand>
        <name>Zn(2+)</name>
        <dbReference type="ChEBI" id="CHEBI:29105"/>
        <label>1</label>
        <note>catalytic</note>
    </ligand>
</feature>
<feature type="binding site" evidence="1">
    <location>
        <position position="65"/>
    </location>
    <ligand>
        <name>Zn(2+)</name>
        <dbReference type="ChEBI" id="CHEBI:29105"/>
        <label>1</label>
        <note>catalytic</note>
    </ligand>
</feature>
<feature type="binding site" evidence="1">
    <location>
        <position position="67"/>
    </location>
    <ligand>
        <name>Zn(2+)</name>
        <dbReference type="ChEBI" id="CHEBI:29105"/>
        <label>2</label>
        <note>catalytic</note>
    </ligand>
</feature>
<feature type="binding site" evidence="1">
    <location>
        <position position="68"/>
    </location>
    <ligand>
        <name>Zn(2+)</name>
        <dbReference type="ChEBI" id="CHEBI:29105"/>
        <label>2</label>
        <note>catalytic</note>
    </ligand>
</feature>
<feature type="binding site" evidence="1">
    <location>
        <position position="145"/>
    </location>
    <ligand>
        <name>Zn(2+)</name>
        <dbReference type="ChEBI" id="CHEBI:29105"/>
        <label>1</label>
        <note>catalytic</note>
    </ligand>
</feature>
<feature type="binding site" evidence="1">
    <location>
        <position position="216"/>
    </location>
    <ligand>
        <name>Zn(2+)</name>
        <dbReference type="ChEBI" id="CHEBI:29105"/>
        <label>1</label>
        <note>catalytic</note>
    </ligand>
</feature>
<feature type="binding site" evidence="1">
    <location>
        <position position="216"/>
    </location>
    <ligand>
        <name>Zn(2+)</name>
        <dbReference type="ChEBI" id="CHEBI:29105"/>
        <label>2</label>
        <note>catalytic</note>
    </ligand>
</feature>
<feature type="binding site" evidence="1">
    <location>
        <position position="274"/>
    </location>
    <ligand>
        <name>Zn(2+)</name>
        <dbReference type="ChEBI" id="CHEBI:29105"/>
        <label>2</label>
        <note>catalytic</note>
    </ligand>
</feature>
<accession>Q8P1A6</accession>